<evidence type="ECO:0000250" key="1">
    <source>
        <dbReference type="UniProtKB" id="Q96HY6"/>
    </source>
</evidence>
<evidence type="ECO:0000250" key="2">
    <source>
        <dbReference type="UniProtKB" id="Q9VDD1"/>
    </source>
</evidence>
<evidence type="ECO:0000255" key="3"/>
<evidence type="ECO:0000256" key="4">
    <source>
        <dbReference type="SAM" id="MobiDB-lite"/>
    </source>
</evidence>
<evidence type="ECO:0000305" key="5"/>
<organism>
    <name type="scientific">Culex quinquefasciatus</name>
    <name type="common">Southern house mosquito</name>
    <name type="synonym">Culex pungens</name>
    <dbReference type="NCBI Taxonomy" id="7176"/>
    <lineage>
        <taxon>Eukaryota</taxon>
        <taxon>Metazoa</taxon>
        <taxon>Ecdysozoa</taxon>
        <taxon>Arthropoda</taxon>
        <taxon>Hexapoda</taxon>
        <taxon>Insecta</taxon>
        <taxon>Pterygota</taxon>
        <taxon>Neoptera</taxon>
        <taxon>Endopterygota</taxon>
        <taxon>Diptera</taxon>
        <taxon>Nematocera</taxon>
        <taxon>Culicoidea</taxon>
        <taxon>Culicidae</taxon>
        <taxon>Culicinae</taxon>
        <taxon>Culicini</taxon>
        <taxon>Culex</taxon>
        <taxon>Culex</taxon>
    </lineage>
</organism>
<accession>B0WIW5</accession>
<feature type="chain" id="PRO_0000391856" description="DDRGK domain-containing protein 1">
    <location>
        <begin position="1"/>
        <end position="287"/>
    </location>
</feature>
<feature type="topological domain" description="Lumenal" evidence="5">
    <location>
        <begin position="1"/>
        <end position="5"/>
    </location>
</feature>
<feature type="transmembrane region" description="Helical" evidence="3">
    <location>
        <begin position="6"/>
        <end position="26"/>
    </location>
</feature>
<feature type="topological domain" description="Cytoplasmic" evidence="5">
    <location>
        <begin position="27"/>
        <end position="287"/>
    </location>
</feature>
<feature type="region of interest" description="Disordered" evidence="4">
    <location>
        <begin position="28"/>
        <end position="102"/>
    </location>
</feature>
<feature type="region of interest" description="Disordered" evidence="4">
    <location>
        <begin position="135"/>
        <end position="164"/>
    </location>
</feature>
<feature type="compositionally biased region" description="Low complexity" evidence="4">
    <location>
        <begin position="44"/>
        <end position="68"/>
    </location>
</feature>
<feature type="compositionally biased region" description="Basic and acidic residues" evidence="4">
    <location>
        <begin position="85"/>
        <end position="102"/>
    </location>
</feature>
<name>DDRGK_CULQU</name>
<gene>
    <name evidence="2" type="primary">Ddrgk1</name>
    <name type="ORF">CPIJ007479</name>
</gene>
<dbReference type="EMBL" id="DS231953">
    <property type="protein sequence ID" value="EDS28791.1"/>
    <property type="molecule type" value="Genomic_DNA"/>
</dbReference>
<dbReference type="RefSeq" id="XP_001848649.1">
    <property type="nucleotide sequence ID" value="XM_001848597.1"/>
</dbReference>
<dbReference type="SMR" id="B0WIW5"/>
<dbReference type="FunCoup" id="B0WIW5">
    <property type="interactions" value="565"/>
</dbReference>
<dbReference type="STRING" id="7176.B0WIW5"/>
<dbReference type="EnsemblMetazoa" id="CPIJ007479-RA">
    <property type="protein sequence ID" value="CPIJ007479-PA"/>
    <property type="gene ID" value="CPIJ007479"/>
</dbReference>
<dbReference type="KEGG" id="cqu:CpipJ_CPIJ007479"/>
<dbReference type="VEuPathDB" id="VectorBase:CPIJ007479"/>
<dbReference type="VEuPathDB" id="VectorBase:CQUJHB011994"/>
<dbReference type="eggNOG" id="KOG3054">
    <property type="taxonomic scope" value="Eukaryota"/>
</dbReference>
<dbReference type="HOGENOM" id="CLU_059562_1_0_1"/>
<dbReference type="InParanoid" id="B0WIW5"/>
<dbReference type="OMA" id="EFTRECN"/>
<dbReference type="OrthoDB" id="2285710at2759"/>
<dbReference type="PhylomeDB" id="B0WIW5"/>
<dbReference type="Proteomes" id="UP000002320">
    <property type="component" value="Unassembled WGS sequence"/>
</dbReference>
<dbReference type="GO" id="GO:0005789">
    <property type="term" value="C:endoplasmic reticulum membrane"/>
    <property type="evidence" value="ECO:0007669"/>
    <property type="project" value="UniProtKB-SubCell"/>
</dbReference>
<dbReference type="GO" id="GO:0044389">
    <property type="term" value="F:ubiquitin-like protein ligase binding"/>
    <property type="evidence" value="ECO:0007669"/>
    <property type="project" value="TreeGrafter"/>
</dbReference>
<dbReference type="FunFam" id="1.10.10.10:FF:000143">
    <property type="entry name" value="DDRGK domain-containing protein 1"/>
    <property type="match status" value="1"/>
</dbReference>
<dbReference type="Gene3D" id="1.10.10.10">
    <property type="entry name" value="Winged helix-like DNA-binding domain superfamily/Winged helix DNA-binding domain"/>
    <property type="match status" value="1"/>
</dbReference>
<dbReference type="InterPro" id="IPR019153">
    <property type="entry name" value="DDRGK_dom-contain"/>
</dbReference>
<dbReference type="InterPro" id="IPR050899">
    <property type="entry name" value="DDRGK_domain-containing"/>
</dbReference>
<dbReference type="InterPro" id="IPR036388">
    <property type="entry name" value="WH-like_DNA-bd_sf"/>
</dbReference>
<dbReference type="InterPro" id="IPR036390">
    <property type="entry name" value="WH_DNA-bd_sf"/>
</dbReference>
<dbReference type="PANTHER" id="PTHR48176">
    <property type="entry name" value="DDRGK DOMAIN-CONTAINING PROTEIN 1"/>
    <property type="match status" value="1"/>
</dbReference>
<dbReference type="PANTHER" id="PTHR48176:SF1">
    <property type="entry name" value="DDRGK DOMAIN-CONTAINING PROTEIN 1"/>
    <property type="match status" value="1"/>
</dbReference>
<dbReference type="Pfam" id="PF09756">
    <property type="entry name" value="DDRGK"/>
    <property type="match status" value="1"/>
</dbReference>
<dbReference type="SMART" id="SM01128">
    <property type="entry name" value="DDRGK"/>
    <property type="match status" value="1"/>
</dbReference>
<dbReference type="SUPFAM" id="SSF46785">
    <property type="entry name" value="Winged helix' DNA-binding domain"/>
    <property type="match status" value="1"/>
</dbReference>
<protein>
    <recommendedName>
        <fullName>DDRGK domain-containing protein 1</fullName>
    </recommendedName>
</protein>
<reference key="1">
    <citation type="submission" date="2007-03" db="EMBL/GenBank/DDBJ databases">
        <title>Annotation of Culex pipiens quinquefasciatus.</title>
        <authorList>
            <consortium name="The Broad Institute Genome Sequencing Platform"/>
            <person name="Atkinson P.W."/>
            <person name="Hemingway J."/>
            <person name="Christensen B.M."/>
            <person name="Higgs S."/>
            <person name="Kodira C.D."/>
            <person name="Hannick L.I."/>
            <person name="Megy K."/>
            <person name="O'Leary S.B."/>
            <person name="Pearson M."/>
            <person name="Haas B.J."/>
            <person name="Mauceli E."/>
            <person name="Wortman J.R."/>
            <person name="Lee N.H."/>
            <person name="Guigo R."/>
            <person name="Stanke M."/>
            <person name="Alvarado L."/>
            <person name="Amedeo P."/>
            <person name="Antoine C.H."/>
            <person name="Arensburger P."/>
            <person name="Bidwell S.L."/>
            <person name="Crawford M."/>
            <person name="Camaro F."/>
            <person name="Devon K."/>
            <person name="Engels R."/>
            <person name="Hammond M."/>
            <person name="Howarth C."/>
            <person name="Koehrsen M."/>
            <person name="Lawson D."/>
            <person name="Montgomery P."/>
            <person name="Nene V."/>
            <person name="Nusbaum C."/>
            <person name="Puiu D."/>
            <person name="Romero-Severson J."/>
            <person name="Severson D.W."/>
            <person name="Shumway M."/>
            <person name="Sisk P."/>
            <person name="Stolte C."/>
            <person name="Zeng Q."/>
            <person name="Eisenstadt E."/>
            <person name="Fraser-Liggett C.M."/>
            <person name="Strausberg R."/>
            <person name="Galagan J."/>
            <person name="Birren B."/>
            <person name="Collins F.H."/>
        </authorList>
    </citation>
    <scope>NUCLEOTIDE SEQUENCE [LARGE SCALE GENOMIC DNA]</scope>
    <source>
        <strain>JHB</strain>
    </source>
</reference>
<comment type="function">
    <text evidence="1 2">Substrate adapter for ufmylation, the covalent attachment of the ubiquitin-like modifier UFM1 to substrate proteins (By similarity). Required for ufmylation of Atg9; protects the nervous system during aging, possibly by stabilizing Atg9 and supporting its function (By similarity).</text>
</comment>
<comment type="subunit">
    <text evidence="2">Interacts with Atg9; the interaction is transient.</text>
</comment>
<comment type="subcellular location">
    <subcellularLocation>
        <location evidence="1">Endoplasmic reticulum membrane</location>
        <topology evidence="3">Single-pass membrane protein</topology>
    </subcellularLocation>
</comment>
<comment type="similarity">
    <text evidence="5">Belongs to the DDRGK1 family.</text>
</comment>
<keyword id="KW-0256">Endoplasmic reticulum</keyword>
<keyword id="KW-0472">Membrane</keyword>
<keyword id="KW-1185">Reference proteome</keyword>
<keyword id="KW-0812">Transmembrane</keyword>
<keyword id="KW-1133">Transmembrane helix</keyword>
<keyword id="KW-0833">Ubl conjugation pathway</keyword>
<sequence>MDLILLLGIAVALLVILVTLFFFTKGKGSQESGKYNHPRVENEAQAAPRRAQVVRNQRNRARVAAAPAEEQHHAAADGGSDEDEIPHADFNGEKMGAKKRAKLEAKAEKKALREQELKIREDQKKKDALLEEQRKVEAEKEAEEERKREEAEKKAREEKARQEHEEYLRMKEAFSVEEEGFDQEQEDDKQNMLQEFINFVKSNKVVVLEDLAVQFKLKTQAAIDRIVELQKDGRLSGVIDDRGKFIYISEEELNAVAKFIKQRGRVSITELAENSNNLINLVPVSAE</sequence>
<proteinExistence type="inferred from homology"/>